<protein>
    <recommendedName>
        <fullName evidence="1">Cell division protein ZapD</fullName>
    </recommendedName>
    <alternativeName>
        <fullName evidence="1">Z ring-associated protein D</fullName>
    </alternativeName>
</protein>
<accession>Q3JNF2</accession>
<evidence type="ECO:0000255" key="1">
    <source>
        <dbReference type="HAMAP-Rule" id="MF_01092"/>
    </source>
</evidence>
<keyword id="KW-0131">Cell cycle</keyword>
<keyword id="KW-0132">Cell division</keyword>
<keyword id="KW-0963">Cytoplasm</keyword>
<keyword id="KW-0717">Septation</keyword>
<comment type="function">
    <text evidence="1">Cell division factor that enhances FtsZ-ring assembly. Directly interacts with FtsZ and promotes bundling of FtsZ protofilaments, with a reduction in FtsZ GTPase activity.</text>
</comment>
<comment type="subunit">
    <text evidence="1">Interacts with FtsZ.</text>
</comment>
<comment type="subcellular location">
    <subcellularLocation>
        <location evidence="1">Cytoplasm</location>
    </subcellularLocation>
    <text evidence="1">Localizes to mid-cell in an FtsZ-dependent manner.</text>
</comment>
<comment type="similarity">
    <text evidence="1">Belongs to the ZapD family.</text>
</comment>
<reference key="1">
    <citation type="journal article" date="2010" name="Genome Biol. Evol.">
        <title>Continuing evolution of Burkholderia mallei through genome reduction and large-scale rearrangements.</title>
        <authorList>
            <person name="Losada L."/>
            <person name="Ronning C.M."/>
            <person name="DeShazer D."/>
            <person name="Woods D."/>
            <person name="Fedorova N."/>
            <person name="Kim H.S."/>
            <person name="Shabalina S.A."/>
            <person name="Pearson T.R."/>
            <person name="Brinkac L."/>
            <person name="Tan P."/>
            <person name="Nandi T."/>
            <person name="Crabtree J."/>
            <person name="Badger J."/>
            <person name="Beckstrom-Sternberg S."/>
            <person name="Saqib M."/>
            <person name="Schutzer S.E."/>
            <person name="Keim P."/>
            <person name="Nierman W.C."/>
        </authorList>
    </citation>
    <scope>NUCLEOTIDE SEQUENCE [LARGE SCALE GENOMIC DNA]</scope>
    <source>
        <strain>1710b</strain>
    </source>
</reference>
<proteinExistence type="inferred from homology"/>
<name>ZAPD_BURP1</name>
<feature type="chain" id="PRO_1000064898" description="Cell division protein ZapD">
    <location>
        <begin position="1"/>
        <end position="251"/>
    </location>
</feature>
<organism>
    <name type="scientific">Burkholderia pseudomallei (strain 1710b)</name>
    <dbReference type="NCBI Taxonomy" id="320372"/>
    <lineage>
        <taxon>Bacteria</taxon>
        <taxon>Pseudomonadati</taxon>
        <taxon>Pseudomonadota</taxon>
        <taxon>Betaproteobacteria</taxon>
        <taxon>Burkholderiales</taxon>
        <taxon>Burkholderiaceae</taxon>
        <taxon>Burkholderia</taxon>
        <taxon>pseudomallei group</taxon>
    </lineage>
</organism>
<sequence>MILYEYPFNERIRTLLRLEDLFERFTFFVAQEDAREHHVALTTLFEISEVAGRADLKSDLMKELERQRQTLAPFRGNPGIEQNALEAVLGEIEQTLANLAQMQGKTGQHLIDNEWLASIRSRAVIPGGTCKFDLPSYYAWQQWPAEQRRHDIAKWAMPLLPLRDAAMIVLRLARESGQASKVMAMQGSYQQMLSGRTYQLMQVRVPPELRVIPEASANKYMLWVRFTAQDGDVRPRAVDIDVPFQLTLCNL</sequence>
<gene>
    <name evidence="1" type="primary">zapD</name>
    <name type="ordered locus">BURPS1710b_3531</name>
</gene>
<dbReference type="EMBL" id="CP000124">
    <property type="protein sequence ID" value="ABA48529.1"/>
    <property type="molecule type" value="Genomic_DNA"/>
</dbReference>
<dbReference type="RefSeq" id="WP_004195118.1">
    <property type="nucleotide sequence ID" value="NC_007434.1"/>
</dbReference>
<dbReference type="SMR" id="Q3JNF2"/>
<dbReference type="EnsemblBacteria" id="ABA48529">
    <property type="protein sequence ID" value="ABA48529"/>
    <property type="gene ID" value="BURPS1710b_3531"/>
</dbReference>
<dbReference type="GeneID" id="93061613"/>
<dbReference type="KEGG" id="bpm:BURPS1710b_3531"/>
<dbReference type="HOGENOM" id="CLU_076303_0_1_4"/>
<dbReference type="Proteomes" id="UP000002700">
    <property type="component" value="Chromosome I"/>
</dbReference>
<dbReference type="GO" id="GO:0032153">
    <property type="term" value="C:cell division site"/>
    <property type="evidence" value="ECO:0007669"/>
    <property type="project" value="TreeGrafter"/>
</dbReference>
<dbReference type="GO" id="GO:0005737">
    <property type="term" value="C:cytoplasm"/>
    <property type="evidence" value="ECO:0007669"/>
    <property type="project" value="UniProtKB-SubCell"/>
</dbReference>
<dbReference type="GO" id="GO:0000917">
    <property type="term" value="P:division septum assembly"/>
    <property type="evidence" value="ECO:0007669"/>
    <property type="project" value="UniProtKB-KW"/>
</dbReference>
<dbReference type="GO" id="GO:0043093">
    <property type="term" value="P:FtsZ-dependent cytokinesis"/>
    <property type="evidence" value="ECO:0007669"/>
    <property type="project" value="UniProtKB-UniRule"/>
</dbReference>
<dbReference type="Gene3D" id="1.10.3900.10">
    <property type="entry name" value="YacF-like"/>
    <property type="match status" value="1"/>
</dbReference>
<dbReference type="Gene3D" id="2.60.440.10">
    <property type="entry name" value="YacF-like domains"/>
    <property type="match status" value="1"/>
</dbReference>
<dbReference type="HAMAP" id="MF_01092">
    <property type="entry name" value="ZapD"/>
    <property type="match status" value="1"/>
</dbReference>
<dbReference type="InterPro" id="IPR009777">
    <property type="entry name" value="ZapD"/>
</dbReference>
<dbReference type="InterPro" id="IPR027462">
    <property type="entry name" value="ZapD_C"/>
</dbReference>
<dbReference type="InterPro" id="IPR036268">
    <property type="entry name" value="ZapD_sf"/>
</dbReference>
<dbReference type="NCBIfam" id="NF003656">
    <property type="entry name" value="PRK05287.1-4"/>
    <property type="match status" value="1"/>
</dbReference>
<dbReference type="PANTHER" id="PTHR39455">
    <property type="entry name" value="CELL DIVISION PROTEIN ZAPD"/>
    <property type="match status" value="1"/>
</dbReference>
<dbReference type="PANTHER" id="PTHR39455:SF1">
    <property type="entry name" value="CELL DIVISION PROTEIN ZAPD"/>
    <property type="match status" value="1"/>
</dbReference>
<dbReference type="Pfam" id="PF07072">
    <property type="entry name" value="ZapD"/>
    <property type="match status" value="1"/>
</dbReference>
<dbReference type="SUPFAM" id="SSF160950">
    <property type="entry name" value="YacF-like"/>
    <property type="match status" value="1"/>
</dbReference>